<sequence length="165" mass="19052">MANPNKRIMNKKSKQASISSILNFFFFYIMEYFVAVDNETPLGVFTSIEQCEETMKQYPGLHYVVFKYTCPADAENTDVVYLIPSLTLHTPMFVDHCPNRTKQARHVLKKINLVFEEESIENWKVSVNTVFPHVHNRLSAPKFSIDEANEAVEKFLIQAGRLMSL</sequence>
<feature type="chain" id="PRO_0000373543" description="Uncharacterized protein F165R">
    <location>
        <begin position="1"/>
        <end position="165"/>
    </location>
</feature>
<feature type="transmembrane region" description="Helical" evidence="1">
    <location>
        <begin position="16"/>
        <end position="36"/>
    </location>
</feature>
<feature type="splice variant" id="VSP_061332" description="In isoform 2." evidence="2">
    <location>
        <begin position="1"/>
        <end position="29"/>
    </location>
</feature>
<organism>
    <name type="scientific">African swine fever virus (strain Badajoz 1971 Vero-adapted)</name>
    <name type="common">Ba71V</name>
    <name type="synonym">ASFV</name>
    <dbReference type="NCBI Taxonomy" id="10498"/>
    <lineage>
        <taxon>Viruses</taxon>
        <taxon>Varidnaviria</taxon>
        <taxon>Bamfordvirae</taxon>
        <taxon>Nucleocytoviricota</taxon>
        <taxon>Pokkesviricetes</taxon>
        <taxon>Asfuvirales</taxon>
        <taxon>Asfarviridae</taxon>
        <taxon>Asfivirus</taxon>
        <taxon>African swine fever virus</taxon>
    </lineage>
</organism>
<proteinExistence type="evidence at transcript level"/>
<evidence type="ECO:0000255" key="1"/>
<evidence type="ECO:0000269" key="2">
    <source>
    </source>
</evidence>
<evidence type="ECO:0000305" key="3"/>
<accession>Q65145</accession>
<reference key="1">
    <citation type="journal article" date="1995" name="Virology">
        <title>Analysis of the complete nucleotide sequence of African swine fever virus.</title>
        <authorList>
            <person name="Yanez R.J."/>
            <person name="Rodriguez J.M."/>
            <person name="Nogal M.L."/>
            <person name="Yuste L."/>
            <person name="Enriquez C."/>
            <person name="Rodriguez J.F."/>
            <person name="Vinuela E."/>
        </authorList>
    </citation>
    <scope>NUCLEOTIDE SEQUENCE [LARGE SCALE GENOMIC DNA]</scope>
</reference>
<reference key="2">
    <citation type="journal article" date="2020" name="J. Virol.">
        <title>The African Swine Fever Virus Transcriptome.</title>
        <authorList>
            <person name="Cackett G."/>
            <person name="Matelska D."/>
            <person name="Sykora M."/>
            <person name="Portugal R."/>
            <person name="Malecki M."/>
            <person name="Baehler J."/>
            <person name="Dixon L."/>
            <person name="Werner F."/>
        </authorList>
    </citation>
    <scope>INDUCTION</scope>
    <scope>ALTERNATIVE INITIATION</scope>
</reference>
<name>VF165_ASFB7</name>
<gene>
    <name type="ordered locus">Ba71V-046</name>
    <name type="ORF">F165R</name>
</gene>
<comment type="subcellular location">
    <subcellularLocation>
        <location evidence="3">Host membrane</location>
        <topology evidence="3">Single-pass membrane protein</topology>
    </subcellularLocation>
</comment>
<comment type="alternative products">
    <event type="alternative initiation"/>
    <isoform>
        <id>Q65145-1</id>
        <name>1</name>
        <sequence type="displayed"/>
    </isoform>
    <isoform>
        <id>Q65145-2</id>
        <name>2</name>
        <sequence type="described" ref="VSP_061332"/>
    </isoform>
</comment>
<comment type="induction">
    <text evidence="2">Expressed in the late phase of the viral replicative cycle.</text>
</comment>
<comment type="similarity">
    <text evidence="3">Belongs to the asfivirus F165R family.</text>
</comment>
<organismHost>
    <name type="scientific">Ornithodoros</name>
    <name type="common">relapsing fever ticks</name>
    <dbReference type="NCBI Taxonomy" id="6937"/>
</organismHost>
<organismHost>
    <name type="scientific">Sus scrofa</name>
    <name type="common">Pig</name>
    <dbReference type="NCBI Taxonomy" id="9823"/>
</organismHost>
<keyword id="KW-0024">Alternative initiation</keyword>
<keyword id="KW-1043">Host membrane</keyword>
<keyword id="KW-0426">Late protein</keyword>
<keyword id="KW-0472">Membrane</keyword>
<keyword id="KW-1185">Reference proteome</keyword>
<keyword id="KW-0812">Transmembrane</keyword>
<keyword id="KW-1133">Transmembrane helix</keyword>
<protein>
    <recommendedName>
        <fullName>Uncharacterized protein F165R</fullName>
        <shortName>pF165R</shortName>
    </recommendedName>
</protein>
<dbReference type="EMBL" id="U18466">
    <property type="protein sequence ID" value="AAA65276.1"/>
    <property type="molecule type" value="Genomic_DNA"/>
</dbReference>
<dbReference type="RefSeq" id="NP_042740.1">
    <property type="nucleotide sequence ID" value="NC_001659.2"/>
</dbReference>
<dbReference type="GeneID" id="22220428"/>
<dbReference type="KEGG" id="vg:22220428"/>
<dbReference type="Proteomes" id="UP000000624">
    <property type="component" value="Segment"/>
</dbReference>
<dbReference type="GO" id="GO:0033644">
    <property type="term" value="C:host cell membrane"/>
    <property type="evidence" value="ECO:0007669"/>
    <property type="project" value="UniProtKB-SubCell"/>
</dbReference>
<dbReference type="GO" id="GO:0016020">
    <property type="term" value="C:membrane"/>
    <property type="evidence" value="ECO:0007669"/>
    <property type="project" value="UniProtKB-KW"/>
</dbReference>